<reference key="1">
    <citation type="journal article" date="2009" name="Stand. Genomic Sci.">
        <title>Complete genome sequence of Methanoculleus marisnigri Romesser et al. 1981 type strain JR1.</title>
        <authorList>
            <person name="Anderson I.J."/>
            <person name="Sieprawska-Lupa M."/>
            <person name="Lapidus A."/>
            <person name="Nolan M."/>
            <person name="Copeland A."/>
            <person name="Glavina Del Rio T."/>
            <person name="Tice H."/>
            <person name="Dalin E."/>
            <person name="Barry K."/>
            <person name="Saunders E."/>
            <person name="Han C."/>
            <person name="Brettin T."/>
            <person name="Detter J.C."/>
            <person name="Bruce D."/>
            <person name="Mikhailova N."/>
            <person name="Pitluck S."/>
            <person name="Hauser L."/>
            <person name="Land M."/>
            <person name="Lucas S."/>
            <person name="Richardson P."/>
            <person name="Whitman W.B."/>
            <person name="Kyrpides N.C."/>
        </authorList>
    </citation>
    <scope>NUCLEOTIDE SEQUENCE [LARGE SCALE GENOMIC DNA]</scope>
    <source>
        <strain>ATCC 35101 / DSM 1498 / JR1</strain>
    </source>
</reference>
<feature type="chain" id="PRO_1000007123" description="Large ribosomal subunit protein eL21">
    <location>
        <begin position="1"/>
        <end position="97"/>
    </location>
</feature>
<keyword id="KW-0687">Ribonucleoprotein</keyword>
<keyword id="KW-0689">Ribosomal protein</keyword>
<proteinExistence type="inferred from homology"/>
<sequence>MAHHNGPRKKTRYKFKKDLRKRGIPPVTSVIQSFEIGQRVHVVVEPSVQKGMPHRRFHGKTGTVIGQRGRAWLLEVRDGDSVKQVIARPQHLKAQKV</sequence>
<accession>A3CWY7</accession>
<dbReference type="EMBL" id="CP000562">
    <property type="protein sequence ID" value="ABN57887.1"/>
    <property type="molecule type" value="Genomic_DNA"/>
</dbReference>
<dbReference type="RefSeq" id="WP_011844796.1">
    <property type="nucleotide sequence ID" value="NC_009051.1"/>
</dbReference>
<dbReference type="SMR" id="A3CWY7"/>
<dbReference type="STRING" id="368407.Memar_1961"/>
<dbReference type="GeneID" id="4847378"/>
<dbReference type="KEGG" id="mem:Memar_1961"/>
<dbReference type="eggNOG" id="arCOG04129">
    <property type="taxonomic scope" value="Archaea"/>
</dbReference>
<dbReference type="HOGENOM" id="CLU_103610_1_1_2"/>
<dbReference type="OrthoDB" id="6295at2157"/>
<dbReference type="Proteomes" id="UP000002146">
    <property type="component" value="Chromosome"/>
</dbReference>
<dbReference type="GO" id="GO:1990904">
    <property type="term" value="C:ribonucleoprotein complex"/>
    <property type="evidence" value="ECO:0007669"/>
    <property type="project" value="UniProtKB-KW"/>
</dbReference>
<dbReference type="GO" id="GO:0005840">
    <property type="term" value="C:ribosome"/>
    <property type="evidence" value="ECO:0007669"/>
    <property type="project" value="UniProtKB-KW"/>
</dbReference>
<dbReference type="GO" id="GO:0003735">
    <property type="term" value="F:structural constituent of ribosome"/>
    <property type="evidence" value="ECO:0007669"/>
    <property type="project" value="InterPro"/>
</dbReference>
<dbReference type="GO" id="GO:0006412">
    <property type="term" value="P:translation"/>
    <property type="evidence" value="ECO:0007669"/>
    <property type="project" value="UniProtKB-UniRule"/>
</dbReference>
<dbReference type="FunFam" id="2.30.30.70:FF:000001">
    <property type="entry name" value="60S ribosomal protein L21"/>
    <property type="match status" value="1"/>
</dbReference>
<dbReference type="Gene3D" id="2.30.30.70">
    <property type="entry name" value="Ribosomal protein L21"/>
    <property type="match status" value="1"/>
</dbReference>
<dbReference type="HAMAP" id="MF_00369">
    <property type="entry name" value="Ribosomal_eL21"/>
    <property type="match status" value="1"/>
</dbReference>
<dbReference type="InterPro" id="IPR001147">
    <property type="entry name" value="Ribosomal_eL21"/>
</dbReference>
<dbReference type="InterPro" id="IPR022856">
    <property type="entry name" value="Ribosomal_eL21_arc"/>
</dbReference>
<dbReference type="InterPro" id="IPR018259">
    <property type="entry name" value="Ribosomal_eL21_CS"/>
</dbReference>
<dbReference type="InterPro" id="IPR036948">
    <property type="entry name" value="Ribosomal_eL21_sf"/>
</dbReference>
<dbReference type="InterPro" id="IPR008991">
    <property type="entry name" value="Translation_prot_SH3-like_sf"/>
</dbReference>
<dbReference type="NCBIfam" id="NF003303">
    <property type="entry name" value="PRK04306.1"/>
    <property type="match status" value="1"/>
</dbReference>
<dbReference type="PANTHER" id="PTHR20981">
    <property type="entry name" value="60S RIBOSOMAL PROTEIN L21"/>
    <property type="match status" value="1"/>
</dbReference>
<dbReference type="Pfam" id="PF01157">
    <property type="entry name" value="Ribosomal_L21e"/>
    <property type="match status" value="1"/>
</dbReference>
<dbReference type="SUPFAM" id="SSF50104">
    <property type="entry name" value="Translation proteins SH3-like domain"/>
    <property type="match status" value="1"/>
</dbReference>
<dbReference type="PROSITE" id="PS01171">
    <property type="entry name" value="RIBOSOMAL_L21E"/>
    <property type="match status" value="1"/>
</dbReference>
<organism>
    <name type="scientific">Methanoculleus marisnigri (strain ATCC 35101 / DSM 1498 / JR1)</name>
    <dbReference type="NCBI Taxonomy" id="368407"/>
    <lineage>
        <taxon>Archaea</taxon>
        <taxon>Methanobacteriati</taxon>
        <taxon>Methanobacteriota</taxon>
        <taxon>Stenosarchaea group</taxon>
        <taxon>Methanomicrobia</taxon>
        <taxon>Methanomicrobiales</taxon>
        <taxon>Methanomicrobiaceae</taxon>
        <taxon>Methanoculleus</taxon>
    </lineage>
</organism>
<gene>
    <name evidence="1" type="primary">rpl21e</name>
    <name type="ordered locus">Memar_1961</name>
</gene>
<protein>
    <recommendedName>
        <fullName evidence="1">Large ribosomal subunit protein eL21</fullName>
    </recommendedName>
    <alternativeName>
        <fullName evidence="2">50S ribosomal protein L21e</fullName>
    </alternativeName>
</protein>
<comment type="similarity">
    <text evidence="1">Belongs to the eukaryotic ribosomal protein eL21 family.</text>
</comment>
<evidence type="ECO:0000255" key="1">
    <source>
        <dbReference type="HAMAP-Rule" id="MF_00369"/>
    </source>
</evidence>
<evidence type="ECO:0000305" key="2"/>
<name>RL21_METMJ</name>